<gene>
    <name type="ordered locus">MIMI_L678</name>
</gene>
<reference key="1">
    <citation type="journal article" date="2004" name="Science">
        <title>The 1.2-megabase genome sequence of Mimivirus.</title>
        <authorList>
            <person name="Raoult D."/>
            <person name="Audic S."/>
            <person name="Robert C."/>
            <person name="Abergel C."/>
            <person name="Renesto P."/>
            <person name="Ogata H."/>
            <person name="La Scola B."/>
            <person name="Susan M."/>
            <person name="Claverie J.-M."/>
        </authorList>
    </citation>
    <scope>NUCLEOTIDE SEQUENCE [LARGE SCALE GENOMIC DNA]</scope>
    <source>
        <strain>Rowbotham-Bradford</strain>
    </source>
</reference>
<name>YL678_MIMIV</name>
<protein>
    <recommendedName>
        <fullName>Putative SET domain-containing protein L678</fullName>
        <ecNumber>2.1.1.-</ecNumber>
    </recommendedName>
</protein>
<organism>
    <name type="scientific">Acanthamoeba polyphaga mimivirus</name>
    <name type="common">APMV</name>
    <dbReference type="NCBI Taxonomy" id="212035"/>
    <lineage>
        <taxon>Viruses</taxon>
        <taxon>Varidnaviria</taxon>
        <taxon>Bamfordvirae</taxon>
        <taxon>Nucleocytoviricota</taxon>
        <taxon>Megaviricetes</taxon>
        <taxon>Imitervirales</taxon>
        <taxon>Mimiviridae</taxon>
        <taxon>Megamimivirinae</taxon>
        <taxon>Mimivirus</taxon>
        <taxon>Mimivirus bradfordmassiliense</taxon>
    </lineage>
</organism>
<keyword id="KW-0489">Methyltransferase</keyword>
<keyword id="KW-1185">Reference proteome</keyword>
<keyword id="KW-0949">S-adenosyl-L-methionine</keyword>
<keyword id="KW-0808">Transferase</keyword>
<organismHost>
    <name type="scientific">Acanthamoeba polyphaga</name>
    <name type="common">Amoeba</name>
    <dbReference type="NCBI Taxonomy" id="5757"/>
</organismHost>
<sequence>MWKDNRISEVFIKKKGIGMIALADIPANTLIMKELPISIVKINNQTVSDIFQILYDVLSDPNKKSLFEKFLPNSINEFESHRNNLMKEFHKLKKSRLNNVYQFINNNFTSDEILLYGAKYMCNAFEFNNGSAILINGAKFNHSCVPNVIFVSDENYMYFYTVRNIKTGEELTDNYVDIMSNTKTRKNRLFNQYGFDCQCERCIGSDKLFYQEVEKIQSSKFYFSNQISVNHRKKLQQNSKNLKKNPKKTIKATPK</sequence>
<evidence type="ECO:0000255" key="1">
    <source>
        <dbReference type="PROSITE-ProRule" id="PRU00190"/>
    </source>
</evidence>
<evidence type="ECO:0000256" key="2">
    <source>
        <dbReference type="SAM" id="MobiDB-lite"/>
    </source>
</evidence>
<comment type="similarity">
    <text evidence="1">Belongs to the class V-like SAM-binding methyltransferase superfamily.</text>
</comment>
<feature type="chain" id="PRO_0000071311" description="Putative SET domain-containing protein L678">
    <location>
        <begin position="1"/>
        <end position="255"/>
    </location>
</feature>
<feature type="domain" description="SET" evidence="1">
    <location>
        <begin position="5"/>
        <end position="176"/>
    </location>
</feature>
<feature type="region of interest" description="Disordered" evidence="2">
    <location>
        <begin position="235"/>
        <end position="255"/>
    </location>
</feature>
<proteinExistence type="inferred from homology"/>
<accession>Q5UNT8</accession>
<dbReference type="EC" id="2.1.1.-"/>
<dbReference type="EMBL" id="AY653733">
    <property type="protein sequence ID" value="AAV50939.1"/>
    <property type="molecule type" value="Genomic_DNA"/>
</dbReference>
<dbReference type="SMR" id="Q5UNT8"/>
<dbReference type="KEGG" id="vg:9925326"/>
<dbReference type="OrthoDB" id="32363at10239"/>
<dbReference type="Proteomes" id="UP000001134">
    <property type="component" value="Genome"/>
</dbReference>
<dbReference type="GO" id="GO:0008168">
    <property type="term" value="F:methyltransferase activity"/>
    <property type="evidence" value="ECO:0007669"/>
    <property type="project" value="UniProtKB-KW"/>
</dbReference>
<dbReference type="GO" id="GO:0032259">
    <property type="term" value="P:methylation"/>
    <property type="evidence" value="ECO:0007669"/>
    <property type="project" value="UniProtKB-KW"/>
</dbReference>
<dbReference type="CDD" id="cd20071">
    <property type="entry name" value="SET_SMYD"/>
    <property type="match status" value="1"/>
</dbReference>
<dbReference type="Gene3D" id="2.170.270.10">
    <property type="entry name" value="SET domain"/>
    <property type="match status" value="1"/>
</dbReference>
<dbReference type="InterPro" id="IPR050869">
    <property type="entry name" value="H3K4_H4K5_MeTrfase"/>
</dbReference>
<dbReference type="InterPro" id="IPR001214">
    <property type="entry name" value="SET_dom"/>
</dbReference>
<dbReference type="InterPro" id="IPR046341">
    <property type="entry name" value="SET_dom_sf"/>
</dbReference>
<dbReference type="PANTHER" id="PTHR12197">
    <property type="entry name" value="HISTONE-LYSINE N-METHYLTRANSFERASE SMYD"/>
    <property type="match status" value="1"/>
</dbReference>
<dbReference type="Pfam" id="PF00856">
    <property type="entry name" value="SET"/>
    <property type="match status" value="1"/>
</dbReference>
<dbReference type="SMART" id="SM00317">
    <property type="entry name" value="SET"/>
    <property type="match status" value="1"/>
</dbReference>
<dbReference type="SUPFAM" id="SSF82199">
    <property type="entry name" value="SET domain"/>
    <property type="match status" value="1"/>
</dbReference>
<dbReference type="PROSITE" id="PS50280">
    <property type="entry name" value="SET"/>
    <property type="match status" value="1"/>
</dbReference>